<accession>O49482</accession>
<accession>Q53ZN0</accession>
<reference key="1">
    <citation type="journal article" date="2004" name="Proc. Natl. Acad. Sci. U.S.A.">
        <title>Functional reclassification of the putative cinnamyl alcohol dehydrogenase multigene family in Arabidopsis.</title>
        <authorList>
            <person name="Kim S.-J."/>
            <person name="Kim M.-R."/>
            <person name="Bedgar D.L."/>
            <person name="Moinuddin S.G.A."/>
            <person name="Cardenas C.L."/>
            <person name="Davin L.B."/>
            <person name="Kang C."/>
            <person name="Lewis N.G."/>
        </authorList>
    </citation>
    <scope>NUCLEOTIDE SEQUENCE [MRNA]</scope>
    <scope>FUNCTION</scope>
    <scope>CATALYTIC ACTIVITY</scope>
    <scope>BIOPHYSICOCHEMICAL PROPERTIES</scope>
    <scope>PATHWAY</scope>
    <scope>GENE FAMILY</scope>
    <scope>NOMENCLATURE</scope>
</reference>
<reference key="2">
    <citation type="journal article" date="1999" name="Nature">
        <title>Sequence and analysis of chromosome 4 of the plant Arabidopsis thaliana.</title>
        <authorList>
            <person name="Mayer K.F.X."/>
            <person name="Schueller C."/>
            <person name="Wambutt R."/>
            <person name="Murphy G."/>
            <person name="Volckaert G."/>
            <person name="Pohl T."/>
            <person name="Duesterhoeft A."/>
            <person name="Stiekema W."/>
            <person name="Entian K.-D."/>
            <person name="Terryn N."/>
            <person name="Harris B."/>
            <person name="Ansorge W."/>
            <person name="Brandt P."/>
            <person name="Grivell L.A."/>
            <person name="Rieger M."/>
            <person name="Weichselgartner M."/>
            <person name="de Simone V."/>
            <person name="Obermaier B."/>
            <person name="Mache R."/>
            <person name="Mueller M."/>
            <person name="Kreis M."/>
            <person name="Delseny M."/>
            <person name="Puigdomenech P."/>
            <person name="Watson M."/>
            <person name="Schmidtheini T."/>
            <person name="Reichert B."/>
            <person name="Portetelle D."/>
            <person name="Perez-Alonso M."/>
            <person name="Boutry M."/>
            <person name="Bancroft I."/>
            <person name="Vos P."/>
            <person name="Hoheisel J."/>
            <person name="Zimmermann W."/>
            <person name="Wedler H."/>
            <person name="Ridley P."/>
            <person name="Langham S.-A."/>
            <person name="McCullagh B."/>
            <person name="Bilham L."/>
            <person name="Robben J."/>
            <person name="van der Schueren J."/>
            <person name="Grymonprez B."/>
            <person name="Chuang Y.-J."/>
            <person name="Vandenbussche F."/>
            <person name="Braeken M."/>
            <person name="Weltjens I."/>
            <person name="Voet M."/>
            <person name="Bastiaens I."/>
            <person name="Aert R."/>
            <person name="Defoor E."/>
            <person name="Weitzenegger T."/>
            <person name="Bothe G."/>
            <person name="Ramsperger U."/>
            <person name="Hilbert H."/>
            <person name="Braun M."/>
            <person name="Holzer E."/>
            <person name="Brandt A."/>
            <person name="Peters S."/>
            <person name="van Staveren M."/>
            <person name="Dirkse W."/>
            <person name="Mooijman P."/>
            <person name="Klein Lankhorst R."/>
            <person name="Rose M."/>
            <person name="Hauf J."/>
            <person name="Koetter P."/>
            <person name="Berneiser S."/>
            <person name="Hempel S."/>
            <person name="Feldpausch M."/>
            <person name="Lamberth S."/>
            <person name="Van den Daele H."/>
            <person name="De Keyser A."/>
            <person name="Buysshaert C."/>
            <person name="Gielen J."/>
            <person name="Villarroel R."/>
            <person name="De Clercq R."/>
            <person name="van Montagu M."/>
            <person name="Rogers J."/>
            <person name="Cronin A."/>
            <person name="Quail M.A."/>
            <person name="Bray-Allen S."/>
            <person name="Clark L."/>
            <person name="Doggett J."/>
            <person name="Hall S."/>
            <person name="Kay M."/>
            <person name="Lennard N."/>
            <person name="McLay K."/>
            <person name="Mayes R."/>
            <person name="Pettett A."/>
            <person name="Rajandream M.A."/>
            <person name="Lyne M."/>
            <person name="Benes V."/>
            <person name="Rechmann S."/>
            <person name="Borkova D."/>
            <person name="Bloecker H."/>
            <person name="Scharfe M."/>
            <person name="Grimm M."/>
            <person name="Loehnert T.-H."/>
            <person name="Dose S."/>
            <person name="de Haan M."/>
            <person name="Maarse A.C."/>
            <person name="Schaefer M."/>
            <person name="Mueller-Auer S."/>
            <person name="Gabel C."/>
            <person name="Fuchs M."/>
            <person name="Fartmann B."/>
            <person name="Granderath K."/>
            <person name="Dauner D."/>
            <person name="Herzl A."/>
            <person name="Neumann S."/>
            <person name="Argiriou A."/>
            <person name="Vitale D."/>
            <person name="Liguori R."/>
            <person name="Piravandi E."/>
            <person name="Massenet O."/>
            <person name="Quigley F."/>
            <person name="Clabauld G."/>
            <person name="Muendlein A."/>
            <person name="Felber R."/>
            <person name="Schnabl S."/>
            <person name="Hiller R."/>
            <person name="Schmidt W."/>
            <person name="Lecharny A."/>
            <person name="Aubourg S."/>
            <person name="Chefdor F."/>
            <person name="Cooke R."/>
            <person name="Berger C."/>
            <person name="Monfort A."/>
            <person name="Casacuberta E."/>
            <person name="Gibbons T."/>
            <person name="Weber N."/>
            <person name="Vandenbol M."/>
            <person name="Bargues M."/>
            <person name="Terol J."/>
            <person name="Torres A."/>
            <person name="Perez-Perez A."/>
            <person name="Purnelle B."/>
            <person name="Bent E."/>
            <person name="Johnson S."/>
            <person name="Tacon D."/>
            <person name="Jesse T."/>
            <person name="Heijnen L."/>
            <person name="Schwarz S."/>
            <person name="Scholler P."/>
            <person name="Heber S."/>
            <person name="Francs P."/>
            <person name="Bielke C."/>
            <person name="Frishman D."/>
            <person name="Haase D."/>
            <person name="Lemcke K."/>
            <person name="Mewes H.-W."/>
            <person name="Stocker S."/>
            <person name="Zaccaria P."/>
            <person name="Bevan M."/>
            <person name="Wilson R.K."/>
            <person name="de la Bastide M."/>
            <person name="Habermann K."/>
            <person name="Parnell L."/>
            <person name="Dedhia N."/>
            <person name="Gnoj L."/>
            <person name="Schutz K."/>
            <person name="Huang E."/>
            <person name="Spiegel L."/>
            <person name="Sekhon M."/>
            <person name="Murray J."/>
            <person name="Sheet P."/>
            <person name="Cordes M."/>
            <person name="Abu-Threideh J."/>
            <person name="Stoneking T."/>
            <person name="Kalicki J."/>
            <person name="Graves T."/>
            <person name="Harmon G."/>
            <person name="Edwards J."/>
            <person name="Latreille P."/>
            <person name="Courtney L."/>
            <person name="Cloud J."/>
            <person name="Abbott A."/>
            <person name="Scott K."/>
            <person name="Johnson D."/>
            <person name="Minx P."/>
            <person name="Bentley D."/>
            <person name="Fulton B."/>
            <person name="Miller N."/>
            <person name="Greco T."/>
            <person name="Kemp K."/>
            <person name="Kramer J."/>
            <person name="Fulton L."/>
            <person name="Mardis E."/>
            <person name="Dante M."/>
            <person name="Pepin K."/>
            <person name="Hillier L.W."/>
            <person name="Nelson J."/>
            <person name="Spieth J."/>
            <person name="Ryan E."/>
            <person name="Andrews S."/>
            <person name="Geisel C."/>
            <person name="Layman D."/>
            <person name="Du H."/>
            <person name="Ali J."/>
            <person name="Berghoff A."/>
            <person name="Jones K."/>
            <person name="Drone K."/>
            <person name="Cotton M."/>
            <person name="Joshu C."/>
            <person name="Antonoiu B."/>
            <person name="Zidanic M."/>
            <person name="Strong C."/>
            <person name="Sun H."/>
            <person name="Lamar B."/>
            <person name="Yordan C."/>
            <person name="Ma P."/>
            <person name="Zhong J."/>
            <person name="Preston R."/>
            <person name="Vil D."/>
            <person name="Shekher M."/>
            <person name="Matero A."/>
            <person name="Shah R."/>
            <person name="Swaby I.K."/>
            <person name="O'Shaughnessy A."/>
            <person name="Rodriguez M."/>
            <person name="Hoffman J."/>
            <person name="Till S."/>
            <person name="Granat S."/>
            <person name="Shohdy N."/>
            <person name="Hasegawa A."/>
            <person name="Hameed A."/>
            <person name="Lodhi M."/>
            <person name="Johnson A."/>
            <person name="Chen E."/>
            <person name="Marra M.A."/>
            <person name="Martienssen R."/>
            <person name="McCombie W.R."/>
        </authorList>
    </citation>
    <scope>NUCLEOTIDE SEQUENCE [LARGE SCALE GENOMIC DNA]</scope>
    <source>
        <strain>cv. Columbia</strain>
    </source>
</reference>
<reference key="3">
    <citation type="journal article" date="2017" name="Plant J.">
        <title>Araport11: a complete reannotation of the Arabidopsis thaliana reference genome.</title>
        <authorList>
            <person name="Cheng C.Y."/>
            <person name="Krishnakumar V."/>
            <person name="Chan A.P."/>
            <person name="Thibaud-Nissen F."/>
            <person name="Schobel S."/>
            <person name="Town C.D."/>
        </authorList>
    </citation>
    <scope>GENOME REANNOTATION</scope>
    <source>
        <strain>cv. Columbia</strain>
    </source>
</reference>
<reference key="4">
    <citation type="journal article" date="2003" name="Science">
        <title>Empirical analysis of transcriptional activity in the Arabidopsis genome.</title>
        <authorList>
            <person name="Yamada K."/>
            <person name="Lim J."/>
            <person name="Dale J.M."/>
            <person name="Chen H."/>
            <person name="Shinn P."/>
            <person name="Palm C.J."/>
            <person name="Southwick A.M."/>
            <person name="Wu H.C."/>
            <person name="Kim C.J."/>
            <person name="Nguyen M."/>
            <person name="Pham P.K."/>
            <person name="Cheuk R.F."/>
            <person name="Karlin-Newmann G."/>
            <person name="Liu S.X."/>
            <person name="Lam B."/>
            <person name="Sakano H."/>
            <person name="Wu T."/>
            <person name="Yu G."/>
            <person name="Miranda M."/>
            <person name="Quach H.L."/>
            <person name="Tripp M."/>
            <person name="Chang C.H."/>
            <person name="Lee J.M."/>
            <person name="Toriumi M.J."/>
            <person name="Chan M.M."/>
            <person name="Tang C.C."/>
            <person name="Onodera C.S."/>
            <person name="Deng J.M."/>
            <person name="Akiyama K."/>
            <person name="Ansari Y."/>
            <person name="Arakawa T."/>
            <person name="Banh J."/>
            <person name="Banno F."/>
            <person name="Bowser L."/>
            <person name="Brooks S.Y."/>
            <person name="Carninci P."/>
            <person name="Chao Q."/>
            <person name="Choy N."/>
            <person name="Enju A."/>
            <person name="Goldsmith A.D."/>
            <person name="Gurjal M."/>
            <person name="Hansen N.F."/>
            <person name="Hayashizaki Y."/>
            <person name="Johnson-Hopson C."/>
            <person name="Hsuan V.W."/>
            <person name="Iida K."/>
            <person name="Karnes M."/>
            <person name="Khan S."/>
            <person name="Koesema E."/>
            <person name="Ishida J."/>
            <person name="Jiang P.X."/>
            <person name="Jones T."/>
            <person name="Kawai J."/>
            <person name="Kamiya A."/>
            <person name="Meyers C."/>
            <person name="Nakajima M."/>
            <person name="Narusaka M."/>
            <person name="Seki M."/>
            <person name="Sakurai T."/>
            <person name="Satou M."/>
            <person name="Tamse R."/>
            <person name="Vaysberg M."/>
            <person name="Wallender E.K."/>
            <person name="Wong C."/>
            <person name="Yamamura Y."/>
            <person name="Yuan S."/>
            <person name="Shinozaki K."/>
            <person name="Davis R.W."/>
            <person name="Theologis A."/>
            <person name="Ecker J.R."/>
        </authorList>
    </citation>
    <scope>NUCLEOTIDE SEQUENCE [LARGE SCALE MRNA]</scope>
    <source>
        <strain>cv. Columbia</strain>
    </source>
</reference>
<reference key="5">
    <citation type="journal article" date="2003" name="Plant Physiol.">
        <title>Expression pattern of two paralogs encoding cinnamyl alcohol dehydrogenases in Arabidopsis. Isolation and characterization of the corresponding mutants.</title>
        <authorList>
            <person name="Sibout R."/>
            <person name="Eudes A."/>
            <person name="Pollet B."/>
            <person name="Goujon T."/>
            <person name="Mila I."/>
            <person name="Granier F."/>
            <person name="Seguin A."/>
            <person name="Lapierre C."/>
            <person name="Jouanin L."/>
        </authorList>
    </citation>
    <scope>FUNCTION</scope>
    <scope>TISSUE SPECIFICITY</scope>
</reference>
<reference key="6">
    <citation type="journal article" date="2005" name="Plant Cell">
        <title>CINNAMYL ALCOHOL DEHYDROGENASE-C and -D are the primary genes involved in lignin biosynthesis in the floral stem of Arabidopsis.</title>
        <authorList>
            <person name="Sibout R."/>
            <person name="Eudes A."/>
            <person name="Mouille G."/>
            <person name="Pollet B."/>
            <person name="Lapierre C."/>
            <person name="Jouanin L."/>
            <person name="Seguin A."/>
        </authorList>
    </citation>
    <scope>FUNCTION</scope>
    <scope>DISRUPTION PHENOTYPE</scope>
</reference>
<reference key="7">
    <citation type="journal article" date="2007" name="Phytochemistry">
        <title>Expression of cinnamyl alcohol dehydrogenases and their putative homologues during Arabidopsis thaliana growth and development: lessons for database annotations?</title>
        <authorList>
            <person name="Kim S.-J."/>
            <person name="Kim K.-W."/>
            <person name="Cho M.-H."/>
            <person name="Franceschi V.R."/>
            <person name="Davin L.B."/>
            <person name="Lewis N.G."/>
        </authorList>
    </citation>
    <scope>TISSUE SPECIFICITY</scope>
</reference>
<reference key="8">
    <citation type="journal article" date="2006" name="Org. Biomol. Chem.">
        <title>Crystal structures and catalytic mechanism of the Arabidopsis cinnamyl alcohol dehydrogenases AtCAD5 and AtCAD4.</title>
        <authorList>
            <person name="Youn B."/>
            <person name="Camacho R."/>
            <person name="Moinuddin S.G.A."/>
            <person name="Lee C."/>
            <person name="Davin L.B."/>
            <person name="Lewis N.G."/>
            <person name="Kang C."/>
        </authorList>
    </citation>
    <scope>X-RAY CRYSTALLOGRAPHY (2.0 ANGSTROMS) IN COMPLEX WITH ZINC IONS AND NADP</scope>
    <scope>COFACTOR</scope>
    <scope>MUTAGENESIS OF GLU-70</scope>
    <scope>SUBUNIT</scope>
</reference>
<proteinExistence type="evidence at protein level"/>
<comment type="function">
    <text evidence="1 2 3">Involved in lignin biosynthesis in the floral stem. Catalyzes the final step specific for the production of lignin monomers. Catalyzes the NADPH-dependent reduction of coniferaldehyde, 5-hydroxyconiferaldehyde, sinapaldehyde, 4-coumaraldehyde and caffeyl aldehyde to their respective alcohols.</text>
</comment>
<comment type="catalytic activity">
    <reaction evidence="2">
        <text>(E)-cinnamyl alcohol + NADP(+) = (E)-cinnamaldehyde + NADPH + H(+)</text>
        <dbReference type="Rhea" id="RHEA:10392"/>
        <dbReference type="ChEBI" id="CHEBI:15378"/>
        <dbReference type="ChEBI" id="CHEBI:16731"/>
        <dbReference type="ChEBI" id="CHEBI:33227"/>
        <dbReference type="ChEBI" id="CHEBI:57783"/>
        <dbReference type="ChEBI" id="CHEBI:58349"/>
        <dbReference type="EC" id="1.1.1.195"/>
    </reaction>
    <physiologicalReaction direction="right-to-left" evidence="2">
        <dbReference type="Rhea" id="RHEA:10394"/>
    </physiologicalReaction>
</comment>
<comment type="catalytic activity">
    <reaction evidence="2">
        <text>(E)-coniferol + NADP(+) = (E)-coniferaldehyde + NADPH + H(+)</text>
        <dbReference type="Rhea" id="RHEA:22444"/>
        <dbReference type="ChEBI" id="CHEBI:15378"/>
        <dbReference type="ChEBI" id="CHEBI:16547"/>
        <dbReference type="ChEBI" id="CHEBI:17745"/>
        <dbReference type="ChEBI" id="CHEBI:57783"/>
        <dbReference type="ChEBI" id="CHEBI:58349"/>
        <dbReference type="EC" id="1.1.1.195"/>
    </reaction>
    <physiologicalReaction direction="right-to-left" evidence="2">
        <dbReference type="Rhea" id="RHEA:22446"/>
    </physiologicalReaction>
</comment>
<comment type="catalytic activity">
    <reaction evidence="2">
        <text>(E)-sinapyl alcohol + NADP(+) = (E)-sinapaldehyde + NADPH + H(+)</text>
        <dbReference type="Rhea" id="RHEA:45704"/>
        <dbReference type="ChEBI" id="CHEBI:15378"/>
        <dbReference type="ChEBI" id="CHEBI:27949"/>
        <dbReference type="ChEBI" id="CHEBI:57783"/>
        <dbReference type="ChEBI" id="CHEBI:58349"/>
        <dbReference type="ChEBI" id="CHEBI:64557"/>
        <dbReference type="EC" id="1.1.1.195"/>
    </reaction>
    <physiologicalReaction direction="right-to-left" evidence="2">
        <dbReference type="Rhea" id="RHEA:45706"/>
    </physiologicalReaction>
</comment>
<comment type="catalytic activity">
    <reaction evidence="2">
        <text>(E)-4-coumaroyl alcohol + NADP(+) = (E)-4-coumaraldehyde + NADPH + H(+)</text>
        <dbReference type="Rhea" id="RHEA:45724"/>
        <dbReference type="ChEBI" id="CHEBI:15378"/>
        <dbReference type="ChEBI" id="CHEBI:28353"/>
        <dbReference type="ChEBI" id="CHEBI:57783"/>
        <dbReference type="ChEBI" id="CHEBI:58349"/>
        <dbReference type="ChEBI" id="CHEBI:64555"/>
        <dbReference type="EC" id="1.1.1.195"/>
    </reaction>
    <physiologicalReaction direction="right-to-left" evidence="2">
        <dbReference type="Rhea" id="RHEA:45726"/>
    </physiologicalReaction>
</comment>
<comment type="catalytic activity">
    <reaction evidence="2">
        <text>(E)-caffeyl alcohol + NADP(+) = (E)-caffeyl aldehyde + NADPH + H(+)</text>
        <dbReference type="Rhea" id="RHEA:45728"/>
        <dbReference type="ChEBI" id="CHEBI:15378"/>
        <dbReference type="ChEBI" id="CHEBI:28323"/>
        <dbReference type="ChEBI" id="CHEBI:31334"/>
        <dbReference type="ChEBI" id="CHEBI:57783"/>
        <dbReference type="ChEBI" id="CHEBI:58349"/>
    </reaction>
    <physiologicalReaction direction="right-to-left" evidence="2">
        <dbReference type="Rhea" id="RHEA:45730"/>
    </physiologicalReaction>
</comment>
<comment type="cofactor">
    <cofactor evidence="4">
        <name>Zn(2+)</name>
        <dbReference type="ChEBI" id="CHEBI:29105"/>
    </cofactor>
    <text evidence="4">Binds 2 Zn(2+) ions per subunit.</text>
</comment>
<comment type="biophysicochemical properties">
    <kinetics>
        <KM evidence="2">13 uM for 4-coumaraldehyde (at pH 6.25-6.5 and 30 degrees Celsius)</KM>
        <KM evidence="2">68 uM for caffeyl aldehyde (at pH 6.0-6.25 and 30-35 degrees Celsius)</KM>
        <KM evidence="2">35 uM for coniferaldehyde (at pH 6.0-6.25 and 30-35 degrees Celsius)</KM>
        <KM evidence="2">22 uM for 5-hydroxyconiferaldehyde (at pH 6.25-6.5 and 30 degrees Celsius)</KM>
        <KM evidence="2">20 uM for sinapaldehyde (at pH 6.0-6.25 and 30-35 degrees Celsius)</KM>
        <Vmax evidence="2">187.3 pmol/sec/ug enzyme with 4-coumaraldehyde as substrate (at pH 6.25-6.5 and 30 degrees Celsius)</Vmax>
        <Vmax evidence="2">94.1 pmol/sec/ug enzyme with caffeyl aldehyde as substrate (at pH 6.0-6.25 and 30-35 degrees Celsius)</Vmax>
        <Vmax evidence="2">157.4 pmol/sec/ug enzyme with coniferaldehyde as substrate (at pH 6.0-6.25 and 30-35 degrees Celsius)</Vmax>
        <Vmax evidence="2">106.9 pmol/sec/ug enzyme with 5-hydroxyconiferaldehyde as substrate (at pH 6.25-6.5 and 30 degrees Celsius)</Vmax>
        <Vmax evidence="2">177.0 pmol/sec/ug enzyme with sinapaldehyde as substrate (at pH 6.0-6.25 and 30-35 degrees Celsius)</Vmax>
    </kinetics>
</comment>
<comment type="pathway">
    <text evidence="9">Aromatic compound metabolism; phenylpropanoid biosynthesis.</text>
</comment>
<comment type="subunit">
    <text evidence="4">Homodimer.</text>
</comment>
<comment type="alternative products">
    <event type="alternative splicing"/>
    <isoform>
        <id>O49482-1</id>
        <name>1</name>
        <sequence type="displayed"/>
    </isoform>
    <text>A number of isoforms are produced. According to EST sequences.</text>
</comment>
<comment type="tissue specificity">
    <text evidence="1 5">Expressed at the lateral root initiation sites, in the vascular tissues of the primary lateral root and the root caps. Expressed in the hypocotyl, cotyledon and leaf veins, apical meristem region, at the base of the trichomes, hydathodes and cauline leaves. In stems, expressed in the cells associated with the vascular cambium, interfascicular cambium and the developing xylem. Expressed in the vascular strand of petals and sepals, anthers, stamen filaments, stigma in flowers, and abscission, style and stigmatic regions of siliques.</text>
</comment>
<comment type="disruption phenotype">
    <text evidence="3">Reduced lignin content and rigidity of the floral stems.</text>
</comment>
<comment type="similarity">
    <text evidence="8">Belongs to the zinc-containing alcohol dehydrogenase family.</text>
</comment>
<name>CADH5_ARATH</name>
<evidence type="ECO:0000269" key="1">
    <source>
    </source>
</evidence>
<evidence type="ECO:0000269" key="2">
    <source>
    </source>
</evidence>
<evidence type="ECO:0000269" key="3">
    <source>
    </source>
</evidence>
<evidence type="ECO:0000269" key="4">
    <source>
    </source>
</evidence>
<evidence type="ECO:0000269" key="5">
    <source>
    </source>
</evidence>
<evidence type="ECO:0000303" key="6">
    <source>
    </source>
</evidence>
<evidence type="ECO:0000303" key="7">
    <source>
    </source>
</evidence>
<evidence type="ECO:0000305" key="8"/>
<evidence type="ECO:0000305" key="9">
    <source>
    </source>
</evidence>
<evidence type="ECO:0000312" key="10">
    <source>
        <dbReference type="Araport" id="AT4G34230"/>
    </source>
</evidence>
<evidence type="ECO:0000312" key="11">
    <source>
        <dbReference type="EMBL" id="CAA17549.1"/>
    </source>
</evidence>
<evidence type="ECO:0007744" key="12">
    <source>
        <dbReference type="PDB" id="2CF5"/>
    </source>
</evidence>
<evidence type="ECO:0007744" key="13">
    <source>
        <dbReference type="PDB" id="2CF6"/>
    </source>
</evidence>
<evidence type="ECO:0007829" key="14">
    <source>
        <dbReference type="PDB" id="2CF5"/>
    </source>
</evidence>
<evidence type="ECO:0007829" key="15">
    <source>
        <dbReference type="PDB" id="2CF6"/>
    </source>
</evidence>
<protein>
    <recommendedName>
        <fullName evidence="6">Cinnamyl alcohol dehydrogenase 5</fullName>
        <shortName evidence="6">AtCAD5</shortName>
        <ecNumber evidence="2">1.1.1.195</ecNumber>
    </recommendedName>
    <alternativeName>
        <fullName evidence="7">Cinnamyl alcohol dehydrogenase D</fullName>
    </alternativeName>
</protein>
<organism>
    <name type="scientific">Arabidopsis thaliana</name>
    <name type="common">Mouse-ear cress</name>
    <dbReference type="NCBI Taxonomy" id="3702"/>
    <lineage>
        <taxon>Eukaryota</taxon>
        <taxon>Viridiplantae</taxon>
        <taxon>Streptophyta</taxon>
        <taxon>Embryophyta</taxon>
        <taxon>Tracheophyta</taxon>
        <taxon>Spermatophyta</taxon>
        <taxon>Magnoliopsida</taxon>
        <taxon>eudicotyledons</taxon>
        <taxon>Gunneridae</taxon>
        <taxon>Pentapetalae</taxon>
        <taxon>rosids</taxon>
        <taxon>malvids</taxon>
        <taxon>Brassicales</taxon>
        <taxon>Brassicaceae</taxon>
        <taxon>Camelineae</taxon>
        <taxon>Arabidopsis</taxon>
    </lineage>
</organism>
<keyword id="KW-0002">3D-structure</keyword>
<keyword id="KW-0025">Alternative splicing</keyword>
<keyword id="KW-0438">Lignin biosynthesis</keyword>
<keyword id="KW-0479">Metal-binding</keyword>
<keyword id="KW-0521">NADP</keyword>
<keyword id="KW-0560">Oxidoreductase</keyword>
<keyword id="KW-1185">Reference proteome</keyword>
<keyword id="KW-0862">Zinc</keyword>
<dbReference type="EC" id="1.1.1.195" evidence="2"/>
<dbReference type="EMBL" id="AY302082">
    <property type="protein sequence ID" value="AAP59435.1"/>
    <property type="molecule type" value="mRNA"/>
</dbReference>
<dbReference type="EMBL" id="AL021961">
    <property type="protein sequence ID" value="CAA17549.1"/>
    <property type="molecule type" value="Genomic_DNA"/>
</dbReference>
<dbReference type="EMBL" id="AL161585">
    <property type="protein sequence ID" value="CAB80140.1"/>
    <property type="molecule type" value="Genomic_DNA"/>
</dbReference>
<dbReference type="EMBL" id="CP002687">
    <property type="protein sequence ID" value="AEE86344.1"/>
    <property type="molecule type" value="Genomic_DNA"/>
</dbReference>
<dbReference type="EMBL" id="AY034919">
    <property type="protein sequence ID" value="AAK59426.1"/>
    <property type="molecule type" value="mRNA"/>
</dbReference>
<dbReference type="EMBL" id="AY113919">
    <property type="protein sequence ID" value="AAM44967.1"/>
    <property type="molecule type" value="mRNA"/>
</dbReference>
<dbReference type="PIR" id="T05413">
    <property type="entry name" value="T05413"/>
</dbReference>
<dbReference type="RefSeq" id="NP_195149.1">
    <molecule id="O49482-1"/>
    <property type="nucleotide sequence ID" value="NM_119587.4"/>
</dbReference>
<dbReference type="PDB" id="2CF5">
    <property type="method" value="X-ray"/>
    <property type="resolution" value="2.00 A"/>
    <property type="chains" value="A=1-357"/>
</dbReference>
<dbReference type="PDB" id="2CF6">
    <property type="method" value="X-ray"/>
    <property type="resolution" value="2.60 A"/>
    <property type="chains" value="A=1-357"/>
</dbReference>
<dbReference type="PDBsum" id="2CF5"/>
<dbReference type="PDBsum" id="2CF6"/>
<dbReference type="SMR" id="O49482"/>
<dbReference type="BioGRID" id="14854">
    <property type="interactions" value="6"/>
</dbReference>
<dbReference type="FunCoup" id="O49482">
    <property type="interactions" value="412"/>
</dbReference>
<dbReference type="IntAct" id="O49482">
    <property type="interactions" value="4"/>
</dbReference>
<dbReference type="STRING" id="3702.O49482"/>
<dbReference type="MetOSite" id="O49482"/>
<dbReference type="PaxDb" id="3702-AT4G34230.2"/>
<dbReference type="ProteomicsDB" id="240585">
    <molecule id="O49482-1"/>
</dbReference>
<dbReference type="EnsemblPlants" id="AT4G34230.1">
    <molecule id="O49482-1"/>
    <property type="protein sequence ID" value="AT4G34230.1"/>
    <property type="gene ID" value="AT4G34230"/>
</dbReference>
<dbReference type="GeneID" id="829572"/>
<dbReference type="Gramene" id="AT4G34230.1">
    <molecule id="O49482-1"/>
    <property type="protein sequence ID" value="AT4G34230.1"/>
    <property type="gene ID" value="AT4G34230"/>
</dbReference>
<dbReference type="KEGG" id="ath:AT4G34230"/>
<dbReference type="Araport" id="AT4G34230"/>
<dbReference type="TAIR" id="AT4G34230">
    <property type="gene designation" value="CAD5"/>
</dbReference>
<dbReference type="eggNOG" id="KOG0023">
    <property type="taxonomic scope" value="Eukaryota"/>
</dbReference>
<dbReference type="HOGENOM" id="CLU_026673_20_2_1"/>
<dbReference type="InParanoid" id="O49482"/>
<dbReference type="OrthoDB" id="1879366at2759"/>
<dbReference type="PhylomeDB" id="O49482"/>
<dbReference type="BioCyc" id="MetaCyc:AT4G34230-MONOMER"/>
<dbReference type="BRENDA" id="1.1.1.195">
    <property type="organism ID" value="399"/>
</dbReference>
<dbReference type="SABIO-RK" id="O49482"/>
<dbReference type="UniPathway" id="UPA00711"/>
<dbReference type="CD-CODE" id="4299E36E">
    <property type="entry name" value="Nucleolus"/>
</dbReference>
<dbReference type="EvolutionaryTrace" id="O49482"/>
<dbReference type="PRO" id="PR:O49482"/>
<dbReference type="Proteomes" id="UP000006548">
    <property type="component" value="Chromosome 4"/>
</dbReference>
<dbReference type="ExpressionAtlas" id="O49482">
    <property type="expression patterns" value="baseline and differential"/>
</dbReference>
<dbReference type="GO" id="GO:0005829">
    <property type="term" value="C:cytosol"/>
    <property type="evidence" value="ECO:0007005"/>
    <property type="project" value="TAIR"/>
</dbReference>
<dbReference type="GO" id="GO:0045551">
    <property type="term" value="F:cinnamyl-alcohol dehydrogenase activity"/>
    <property type="evidence" value="ECO:0000314"/>
    <property type="project" value="TAIR"/>
</dbReference>
<dbReference type="GO" id="GO:0050268">
    <property type="term" value="F:coniferyl-alcohol dehydrogenase activity"/>
    <property type="evidence" value="ECO:0007669"/>
    <property type="project" value="RHEA"/>
</dbReference>
<dbReference type="GO" id="GO:0008270">
    <property type="term" value="F:zinc ion binding"/>
    <property type="evidence" value="ECO:0007669"/>
    <property type="project" value="InterPro"/>
</dbReference>
<dbReference type="GO" id="GO:0009809">
    <property type="term" value="P:lignin biosynthetic process"/>
    <property type="evidence" value="ECO:0000315"/>
    <property type="project" value="TAIR"/>
</dbReference>
<dbReference type="CDD" id="cd05283">
    <property type="entry name" value="CAD1"/>
    <property type="match status" value="1"/>
</dbReference>
<dbReference type="FunFam" id="3.40.50.720:FF:000022">
    <property type="entry name" value="Cinnamyl alcohol dehydrogenase"/>
    <property type="match status" value="1"/>
</dbReference>
<dbReference type="FunFam" id="3.90.180.10:FF:000004">
    <property type="entry name" value="probable cinnamyl alcohol dehydrogenase"/>
    <property type="match status" value="1"/>
</dbReference>
<dbReference type="FunFam" id="3.90.180.10:FF:000100">
    <property type="entry name" value="Putative cinnamyl alcohol dehydrogenase 6"/>
    <property type="match status" value="1"/>
</dbReference>
<dbReference type="Gene3D" id="3.90.180.10">
    <property type="entry name" value="Medium-chain alcohol dehydrogenases, catalytic domain"/>
    <property type="match status" value="1"/>
</dbReference>
<dbReference type="Gene3D" id="3.40.50.720">
    <property type="entry name" value="NAD(P)-binding Rossmann-like Domain"/>
    <property type="match status" value="1"/>
</dbReference>
<dbReference type="InterPro" id="IPR013149">
    <property type="entry name" value="ADH-like_C"/>
</dbReference>
<dbReference type="InterPro" id="IPR013154">
    <property type="entry name" value="ADH-like_N"/>
</dbReference>
<dbReference type="InterPro" id="IPR002328">
    <property type="entry name" value="ADH_Zn_CS"/>
</dbReference>
<dbReference type="InterPro" id="IPR047109">
    <property type="entry name" value="CAD-like"/>
</dbReference>
<dbReference type="InterPro" id="IPR011032">
    <property type="entry name" value="GroES-like_sf"/>
</dbReference>
<dbReference type="InterPro" id="IPR036291">
    <property type="entry name" value="NAD(P)-bd_dom_sf"/>
</dbReference>
<dbReference type="InterPro" id="IPR020843">
    <property type="entry name" value="PKS_ER"/>
</dbReference>
<dbReference type="PANTHER" id="PTHR42683">
    <property type="entry name" value="ALDEHYDE REDUCTASE"/>
    <property type="match status" value="1"/>
</dbReference>
<dbReference type="Pfam" id="PF08240">
    <property type="entry name" value="ADH_N"/>
    <property type="match status" value="1"/>
</dbReference>
<dbReference type="Pfam" id="PF00107">
    <property type="entry name" value="ADH_zinc_N"/>
    <property type="match status" value="1"/>
</dbReference>
<dbReference type="SMART" id="SM00829">
    <property type="entry name" value="PKS_ER"/>
    <property type="match status" value="1"/>
</dbReference>
<dbReference type="SUPFAM" id="SSF50129">
    <property type="entry name" value="GroES-like"/>
    <property type="match status" value="1"/>
</dbReference>
<dbReference type="SUPFAM" id="SSF51735">
    <property type="entry name" value="NAD(P)-binding Rossmann-fold domains"/>
    <property type="match status" value="1"/>
</dbReference>
<dbReference type="PROSITE" id="PS00059">
    <property type="entry name" value="ADH_ZINC"/>
    <property type="match status" value="1"/>
</dbReference>
<sequence>MGIMEAERKTTGWAARDPSGILSPYTYTLRETGPEDVNIRIICCGICHTDLHQTKNDLGMSNYPMVPGHEVVGEVVEVGSDVSKFTVGDIVGVGCLVGCCGGCSPCERDLEQYCPKKIWSYNDVYINGQPTQGGFAKATVVHQKFVVKIPEGMAVEQAAPLLCAGVTVYSPLSHFGLKQPGLRGGILGLGGVGHMGVKIAKAMGHHVTVISSSNKKREEALQDLGADDYVIGSDQAKMSELADSLDYVIDTVPVHHALEPYLSLLKLDGKLILMGVINNPLQFLTPLLMLGRKVITGSFIGSMKETEEMLEFCKEKGLSSIIEVVKMDYVNTAFERLEKNDVRYRFVVDVEGSNLDA</sequence>
<feature type="chain" id="PRO_0000160791" description="Cinnamyl alcohol dehydrogenase 5">
    <location>
        <begin position="1"/>
        <end position="357"/>
    </location>
</feature>
<feature type="binding site" evidence="4 12 13">
    <location>
        <position position="47"/>
    </location>
    <ligand>
        <name>Zn(2+)</name>
        <dbReference type="ChEBI" id="CHEBI:29105"/>
        <label>1</label>
        <note>catalytic</note>
    </ligand>
</feature>
<feature type="binding site" evidence="4 13">
    <location>
        <position position="49"/>
    </location>
    <ligand>
        <name>NADP(+)</name>
        <dbReference type="ChEBI" id="CHEBI:58349"/>
    </ligand>
</feature>
<feature type="binding site" evidence="4 12 13">
    <location>
        <position position="69"/>
    </location>
    <ligand>
        <name>Zn(2+)</name>
        <dbReference type="ChEBI" id="CHEBI:29105"/>
        <label>1</label>
        <note>catalytic</note>
    </ligand>
</feature>
<feature type="binding site" evidence="4 12 13">
    <location>
        <position position="70"/>
    </location>
    <ligand>
        <name>Zn(2+)</name>
        <dbReference type="ChEBI" id="CHEBI:29105"/>
        <label>1</label>
        <note>catalytic</note>
    </ligand>
</feature>
<feature type="binding site" evidence="4 12 13">
    <location>
        <position position="100"/>
    </location>
    <ligand>
        <name>Zn(2+)</name>
        <dbReference type="ChEBI" id="CHEBI:29105"/>
        <label>2</label>
    </ligand>
</feature>
<feature type="binding site" evidence="4 12 13">
    <location>
        <position position="103"/>
    </location>
    <ligand>
        <name>Zn(2+)</name>
        <dbReference type="ChEBI" id="CHEBI:29105"/>
        <label>2</label>
    </ligand>
</feature>
<feature type="binding site" evidence="4 12 13">
    <location>
        <position position="106"/>
    </location>
    <ligand>
        <name>Zn(2+)</name>
        <dbReference type="ChEBI" id="CHEBI:29105"/>
        <label>2</label>
    </ligand>
</feature>
<feature type="binding site" evidence="4 12 13">
    <location>
        <position position="114"/>
    </location>
    <ligand>
        <name>Zn(2+)</name>
        <dbReference type="ChEBI" id="CHEBI:29105"/>
        <label>2</label>
    </ligand>
</feature>
<feature type="binding site" evidence="4 12 13">
    <location>
        <position position="163"/>
    </location>
    <ligand>
        <name>Zn(2+)</name>
        <dbReference type="ChEBI" id="CHEBI:29105"/>
        <label>1</label>
        <note>catalytic</note>
    </ligand>
</feature>
<feature type="binding site" evidence="4 13">
    <location>
        <position position="167"/>
    </location>
    <ligand>
        <name>NADP(+)</name>
        <dbReference type="ChEBI" id="CHEBI:58349"/>
    </ligand>
</feature>
<feature type="binding site" evidence="4 13">
    <location>
        <begin position="188"/>
        <end position="193"/>
    </location>
    <ligand>
        <name>NADP(+)</name>
        <dbReference type="ChEBI" id="CHEBI:58349"/>
    </ligand>
</feature>
<feature type="binding site" evidence="4 13">
    <location>
        <begin position="211"/>
        <end position="216"/>
    </location>
    <ligand>
        <name>NADP(+)</name>
        <dbReference type="ChEBI" id="CHEBI:58349"/>
    </ligand>
</feature>
<feature type="binding site" evidence="4 13">
    <location>
        <position position="251"/>
    </location>
    <ligand>
        <name>NADP(+)</name>
        <dbReference type="ChEBI" id="CHEBI:58349"/>
    </ligand>
</feature>
<feature type="binding site" evidence="4 13">
    <location>
        <position position="275"/>
    </location>
    <ligand>
        <name>NADP(+)</name>
        <dbReference type="ChEBI" id="CHEBI:58349"/>
    </ligand>
</feature>
<feature type="binding site" evidence="4 13">
    <location>
        <begin position="298"/>
        <end position="300"/>
    </location>
    <ligand>
        <name>NADP(+)</name>
        <dbReference type="ChEBI" id="CHEBI:58349"/>
    </ligand>
</feature>
<feature type="mutagenesis site" description="Loss of activity." evidence="4">
    <original>E</original>
    <variation>A</variation>
    <location>
        <position position="70"/>
    </location>
</feature>
<feature type="strand" evidence="14">
    <location>
        <begin position="9"/>
        <end position="15"/>
    </location>
</feature>
<feature type="strand" evidence="15">
    <location>
        <begin position="17"/>
        <end position="19"/>
    </location>
</feature>
<feature type="strand" evidence="14">
    <location>
        <begin position="22"/>
        <end position="28"/>
    </location>
</feature>
<feature type="strand" evidence="14">
    <location>
        <begin position="36"/>
        <end position="46"/>
    </location>
</feature>
<feature type="helix" evidence="14">
    <location>
        <begin position="48"/>
        <end position="54"/>
    </location>
</feature>
<feature type="turn" evidence="14">
    <location>
        <begin position="57"/>
        <end position="59"/>
    </location>
</feature>
<feature type="strand" evidence="14">
    <location>
        <begin position="63"/>
        <end position="65"/>
    </location>
</feature>
<feature type="strand" evidence="14">
    <location>
        <begin position="70"/>
        <end position="78"/>
    </location>
</feature>
<feature type="strand" evidence="14">
    <location>
        <begin position="90"/>
        <end position="93"/>
    </location>
</feature>
<feature type="strand" evidence="14">
    <location>
        <begin position="95"/>
        <end position="98"/>
    </location>
</feature>
<feature type="strand" evidence="14">
    <location>
        <begin position="101"/>
        <end position="103"/>
    </location>
</feature>
<feature type="helix" evidence="14">
    <location>
        <begin position="104"/>
        <end position="107"/>
    </location>
</feature>
<feature type="helix" evidence="14">
    <location>
        <begin position="111"/>
        <end position="113"/>
    </location>
</feature>
<feature type="turn" evidence="14">
    <location>
        <begin position="120"/>
        <end position="122"/>
    </location>
</feature>
<feature type="strand" evidence="15">
    <location>
        <begin position="126"/>
        <end position="131"/>
    </location>
</feature>
<feature type="strand" evidence="14">
    <location>
        <begin position="134"/>
        <end position="137"/>
    </location>
</feature>
<feature type="strand" evidence="14">
    <location>
        <begin position="139"/>
        <end position="142"/>
    </location>
</feature>
<feature type="helix" evidence="14">
    <location>
        <begin position="143"/>
        <end position="145"/>
    </location>
</feature>
<feature type="strand" evidence="14">
    <location>
        <begin position="146"/>
        <end position="148"/>
    </location>
</feature>
<feature type="helix" evidence="14">
    <location>
        <begin position="155"/>
        <end position="158"/>
    </location>
</feature>
<feature type="helix" evidence="14">
    <location>
        <begin position="160"/>
        <end position="162"/>
    </location>
</feature>
<feature type="helix" evidence="14">
    <location>
        <begin position="164"/>
        <end position="174"/>
    </location>
</feature>
<feature type="strand" evidence="14">
    <location>
        <begin position="183"/>
        <end position="187"/>
    </location>
</feature>
<feature type="helix" evidence="14">
    <location>
        <begin position="191"/>
        <end position="202"/>
    </location>
</feature>
<feature type="strand" evidence="14">
    <location>
        <begin position="206"/>
        <end position="213"/>
    </location>
</feature>
<feature type="helix" evidence="14">
    <location>
        <begin position="216"/>
        <end position="221"/>
    </location>
</feature>
<feature type="strand" evidence="14">
    <location>
        <begin position="229"/>
        <end position="231"/>
    </location>
</feature>
<feature type="helix" evidence="14">
    <location>
        <begin position="235"/>
        <end position="240"/>
    </location>
</feature>
<feature type="turn" evidence="14">
    <location>
        <begin position="242"/>
        <end position="244"/>
    </location>
</feature>
<feature type="strand" evidence="14">
    <location>
        <begin position="245"/>
        <end position="250"/>
    </location>
</feature>
<feature type="helix" evidence="14">
    <location>
        <begin position="259"/>
        <end position="262"/>
    </location>
</feature>
<feature type="strand" evidence="14">
    <location>
        <begin position="265"/>
        <end position="273"/>
    </location>
</feature>
<feature type="helix" evidence="14">
    <location>
        <begin position="285"/>
        <end position="291"/>
    </location>
</feature>
<feature type="strand" evidence="14">
    <location>
        <begin position="294"/>
        <end position="297"/>
    </location>
</feature>
<feature type="helix" evidence="14">
    <location>
        <begin position="303"/>
        <end position="315"/>
    </location>
</feature>
<feature type="strand" evidence="14">
    <location>
        <begin position="322"/>
        <end position="326"/>
    </location>
</feature>
<feature type="helix" evidence="14">
    <location>
        <begin position="327"/>
        <end position="329"/>
    </location>
</feature>
<feature type="helix" evidence="14">
    <location>
        <begin position="330"/>
        <end position="338"/>
    </location>
</feature>
<feature type="strand" evidence="14">
    <location>
        <begin position="342"/>
        <end position="349"/>
    </location>
</feature>
<gene>
    <name evidence="6" type="primary">CAD5</name>
    <name evidence="7" type="synonym">CAD-D</name>
    <name type="synonym">CAD6</name>
    <name type="synonym">LCAD-D</name>
    <name evidence="10" type="ordered locus">At4g34230</name>
    <name evidence="11" type="ORF">F28A23.10</name>
</gene>